<organism evidence="8">
    <name type="scientific">Trichoplusia ni</name>
    <name type="common">Cabbage looper</name>
    <dbReference type="NCBI Taxonomy" id="7111"/>
    <lineage>
        <taxon>Eukaryota</taxon>
        <taxon>Metazoa</taxon>
        <taxon>Ecdysozoa</taxon>
        <taxon>Arthropoda</taxon>
        <taxon>Hexapoda</taxon>
        <taxon>Insecta</taxon>
        <taxon>Pterygota</taxon>
        <taxon>Neoptera</taxon>
        <taxon>Endopterygota</taxon>
        <taxon>Lepidoptera</taxon>
        <taxon>Glossata</taxon>
        <taxon>Ditrysia</taxon>
        <taxon>Noctuoidea</taxon>
        <taxon>Noctuidae</taxon>
        <taxon>Plusiinae</taxon>
        <taxon>Trichoplusia</taxon>
    </lineage>
</organism>
<reference evidence="8" key="1">
    <citation type="journal article" date="2018" name="Elife">
        <title>The genome of the Hi5 germ cell line from Trichoplusia ni, an agricultural pest and novel model for small RNA biology.</title>
        <authorList>
            <person name="Fu Y."/>
            <person name="Yang Y."/>
            <person name="Zhang H."/>
            <person name="Farley G."/>
            <person name="Wang J."/>
            <person name="Quarles K.A."/>
            <person name="Weng Z."/>
            <person name="Zamore P.D."/>
        </authorList>
    </citation>
    <scope>NUCLEOTIDE SEQUENCE [LARGE SCALE GENOMIC DNA]</scope>
</reference>
<reference evidence="7 9" key="2">
    <citation type="journal article" date="2005" name="J. Mol. Biol.">
        <title>Crystal structure of a secreted insect ferritin reveals a symmetrical arrangement of heavy and light chains.</title>
        <authorList>
            <person name="Hamburger A.E."/>
            <person name="West A.P."/>
            <person name="Hamburger Z.A."/>
            <person name="Hamburger P."/>
            <person name="Bjorkman P.J."/>
        </authorList>
    </citation>
    <scope>NUCLEOTIDE SEQUENCE [MRNA] OF 33-166</scope>
    <scope>PROTEIN SEQUENCE OF 21-31</scope>
    <scope>X-RAY CRYSTALLOGRAPHY (1.91 ANGSTROMS) OF 20-231 IN COMPLEX WITH FER2LCH AND IRON</scope>
    <scope>FUNCTION</scope>
    <scope>SUBUNIT</scope>
    <scope>SUBCELLULAR LOCATION</scope>
    <scope>DISULFIDE BONDS</scope>
</reference>
<proteinExistence type="evidence at protein level"/>
<name>FRIH_TRINI</name>
<gene>
    <name evidence="5" type="primary">Fer1HCH</name>
    <name type="ordered locus">LOC113505694</name>
</gene>
<protein>
    <recommendedName>
        <fullName evidence="5">Ferritin heavy chain</fullName>
        <ecNumber evidence="3">1.16.3.1</ecNumber>
    </recommendedName>
</protein>
<dbReference type="EC" id="1.16.3.1" evidence="3"/>
<dbReference type="EMBL" id="AY970291">
    <property type="protein sequence ID" value="AAX94728.1"/>
    <property type="molecule type" value="mRNA"/>
</dbReference>
<dbReference type="PDB" id="1Z6O">
    <property type="method" value="X-ray"/>
    <property type="resolution" value="1.91 A"/>
    <property type="chains" value="M/N/O/P/Q/R/S/T/U/V/W/X=21-211"/>
</dbReference>
<dbReference type="PDBsum" id="1Z6O"/>
<dbReference type="SMR" id="A0A7E5WTY7"/>
<dbReference type="FunCoup" id="A0A7E5WTY7">
    <property type="interactions" value="13"/>
</dbReference>
<dbReference type="InParanoid" id="A0A7E5WTY7"/>
<dbReference type="OrthoDB" id="186462at2759"/>
<dbReference type="EvolutionaryTrace" id="A0A7E5WTY7"/>
<dbReference type="Proteomes" id="UP000322000">
    <property type="component" value="Unplaced"/>
</dbReference>
<dbReference type="GO" id="GO:0005576">
    <property type="term" value="C:extracellular region"/>
    <property type="evidence" value="ECO:0007669"/>
    <property type="project" value="UniProtKB-SubCell"/>
</dbReference>
<dbReference type="GO" id="GO:0005794">
    <property type="term" value="C:Golgi apparatus"/>
    <property type="evidence" value="ECO:0007669"/>
    <property type="project" value="UniProtKB-SubCell"/>
</dbReference>
<dbReference type="GO" id="GO:0008199">
    <property type="term" value="F:ferric iron binding"/>
    <property type="evidence" value="ECO:0007669"/>
    <property type="project" value="InterPro"/>
</dbReference>
<dbReference type="GO" id="GO:0008198">
    <property type="term" value="F:ferrous iron binding"/>
    <property type="evidence" value="ECO:0007669"/>
    <property type="project" value="TreeGrafter"/>
</dbReference>
<dbReference type="GO" id="GO:0004322">
    <property type="term" value="F:ferroxidase activity"/>
    <property type="evidence" value="ECO:0007669"/>
    <property type="project" value="UniProtKB-EC"/>
</dbReference>
<dbReference type="GO" id="GO:0006879">
    <property type="term" value="P:intracellular iron ion homeostasis"/>
    <property type="evidence" value="ECO:0007669"/>
    <property type="project" value="UniProtKB-KW"/>
</dbReference>
<dbReference type="GO" id="GO:0006826">
    <property type="term" value="P:iron ion transport"/>
    <property type="evidence" value="ECO:0007669"/>
    <property type="project" value="InterPro"/>
</dbReference>
<dbReference type="CDD" id="cd01056">
    <property type="entry name" value="Euk_Ferritin"/>
    <property type="match status" value="1"/>
</dbReference>
<dbReference type="FunFam" id="1.20.1260.10:FF:000017">
    <property type="entry name" value="Ferritin"/>
    <property type="match status" value="1"/>
</dbReference>
<dbReference type="Gene3D" id="1.20.1260.10">
    <property type="match status" value="1"/>
</dbReference>
<dbReference type="InterPro" id="IPR001519">
    <property type="entry name" value="Ferritin"/>
</dbReference>
<dbReference type="InterPro" id="IPR012347">
    <property type="entry name" value="Ferritin-like"/>
</dbReference>
<dbReference type="InterPro" id="IPR009040">
    <property type="entry name" value="Ferritin-like_diiron"/>
</dbReference>
<dbReference type="InterPro" id="IPR009078">
    <property type="entry name" value="Ferritin-like_SF"/>
</dbReference>
<dbReference type="InterPro" id="IPR008331">
    <property type="entry name" value="Ferritin_DPS_dom"/>
</dbReference>
<dbReference type="PANTHER" id="PTHR11431">
    <property type="entry name" value="FERRITIN"/>
    <property type="match status" value="1"/>
</dbReference>
<dbReference type="PANTHER" id="PTHR11431:SF43">
    <property type="entry name" value="FERRITIN"/>
    <property type="match status" value="1"/>
</dbReference>
<dbReference type="Pfam" id="PF00210">
    <property type="entry name" value="Ferritin"/>
    <property type="match status" value="1"/>
</dbReference>
<dbReference type="SUPFAM" id="SSF47240">
    <property type="entry name" value="Ferritin-like"/>
    <property type="match status" value="1"/>
</dbReference>
<dbReference type="PROSITE" id="PS50905">
    <property type="entry name" value="FERRITIN_LIKE"/>
    <property type="match status" value="1"/>
</dbReference>
<accession>A0A7E5WTY7</accession>
<accession>Q52SA9</accession>
<keyword id="KW-0002">3D-structure</keyword>
<keyword id="KW-0903">Direct protein sequencing</keyword>
<keyword id="KW-1015">Disulfide bond</keyword>
<keyword id="KW-0333">Golgi apparatus</keyword>
<keyword id="KW-0408">Iron</keyword>
<keyword id="KW-0409">Iron storage</keyword>
<keyword id="KW-0479">Metal-binding</keyword>
<keyword id="KW-0560">Oxidoreductase</keyword>
<keyword id="KW-1185">Reference proteome</keyword>
<keyword id="KW-0964">Secreted</keyword>
<keyword id="KW-0732">Signal</keyword>
<evidence type="ECO:0000250" key="1">
    <source>
        <dbReference type="UniProtKB" id="Q7KRU8"/>
    </source>
</evidence>
<evidence type="ECO:0000255" key="2">
    <source>
        <dbReference type="PROSITE-ProRule" id="PRU00085"/>
    </source>
</evidence>
<evidence type="ECO:0000255" key="3">
    <source>
        <dbReference type="RuleBase" id="RU361145"/>
    </source>
</evidence>
<evidence type="ECO:0000269" key="4">
    <source>
    </source>
</evidence>
<evidence type="ECO:0000303" key="5">
    <source>
    </source>
</evidence>
<evidence type="ECO:0000305" key="6">
    <source>
    </source>
</evidence>
<evidence type="ECO:0000312" key="7">
    <source>
        <dbReference type="EMBL" id="AAX94728.1"/>
    </source>
</evidence>
<evidence type="ECO:0000312" key="8">
    <source>
        <dbReference type="Proteomes" id="UP000322000"/>
    </source>
</evidence>
<evidence type="ECO:0007744" key="9">
    <source>
        <dbReference type="PDB" id="1Z6O"/>
    </source>
</evidence>
<evidence type="ECO:0007829" key="10">
    <source>
        <dbReference type="PDB" id="1Z6O"/>
    </source>
</evidence>
<comment type="function">
    <text evidence="3 6">Stores iron in a soluble, non-toxic, readily available form. Important for iron homeostasis. Iron is taken up in the ferrous form and deposited as ferric hydroxides after oxidation (By similarity). Ferritin is composed of a heavy (H) chain which is responsible for the oxidation and uptake of ferrous iron, and a light (L) chain which facilitates the nucleation of the ferrihydrite iron core (Probable).</text>
</comment>
<comment type="catalytic activity">
    <reaction evidence="3">
        <text>4 Fe(2+) + O2 + 4 H(+) = 4 Fe(3+) + 2 H2O</text>
        <dbReference type="Rhea" id="RHEA:11148"/>
        <dbReference type="ChEBI" id="CHEBI:15377"/>
        <dbReference type="ChEBI" id="CHEBI:15378"/>
        <dbReference type="ChEBI" id="CHEBI:15379"/>
        <dbReference type="ChEBI" id="CHEBI:29033"/>
        <dbReference type="ChEBI" id="CHEBI:29034"/>
        <dbReference type="EC" id="1.16.3.1"/>
    </reaction>
</comment>
<comment type="subunit">
    <text evidence="4">Oligomer of 12 light (L) chains and 12 heavy (H) chains; L and H chains are disulfide-linked (PubMed:15896348). The functional molecule forms a roughly spherical shell with a diameter of 12 nm and contains a central cavity into which the insoluble ferric iron core is deposited (PubMed:15896348).</text>
</comment>
<comment type="subcellular location">
    <subcellularLocation>
        <location evidence="1">Golgi apparatus</location>
    </subcellularLocation>
    <subcellularLocation>
        <location evidence="4">Secreted</location>
    </subcellularLocation>
</comment>
<comment type="similarity">
    <text evidence="3">Belongs to the ferritin family.</text>
</comment>
<feature type="signal peptide" evidence="4">
    <location>
        <begin position="1"/>
        <end position="20"/>
    </location>
</feature>
<feature type="chain" id="PRO_5028909430" description="Ferritin heavy chain">
    <location>
        <begin position="21"/>
        <end position="211"/>
    </location>
</feature>
<feature type="domain" description="Ferritin-like diiron" evidence="2">
    <location>
        <begin position="35"/>
        <end position="191"/>
    </location>
</feature>
<feature type="binding site" evidence="4 9">
    <location>
        <position position="52"/>
    </location>
    <ligand>
        <name>Fe cation</name>
        <dbReference type="ChEBI" id="CHEBI:24875"/>
        <label>1</label>
    </ligand>
</feature>
<feature type="binding site" evidence="4 9">
    <location>
        <position position="87"/>
    </location>
    <ligand>
        <name>Fe cation</name>
        <dbReference type="ChEBI" id="CHEBI:24875"/>
        <label>1</label>
    </ligand>
</feature>
<feature type="binding site" evidence="6">
    <location>
        <position position="87"/>
    </location>
    <ligand>
        <name>Fe cation</name>
        <dbReference type="ChEBI" id="CHEBI:24875"/>
        <label>2</label>
    </ligand>
</feature>
<feature type="binding site" evidence="4 9">
    <location>
        <position position="90"/>
    </location>
    <ligand>
        <name>Fe cation</name>
        <dbReference type="ChEBI" id="CHEBI:24875"/>
        <label>1</label>
    </ligand>
</feature>
<feature type="binding site" evidence="6">
    <location>
        <position position="136"/>
    </location>
    <ligand>
        <name>Fe cation</name>
        <dbReference type="ChEBI" id="CHEBI:24875"/>
        <label>2</label>
    </ligand>
</feature>
<feature type="binding site" evidence="6">
    <location>
        <position position="173"/>
    </location>
    <ligand>
        <name>Fe cation</name>
        <dbReference type="ChEBI" id="CHEBI:24875"/>
        <label>2</label>
    </ligand>
</feature>
<feature type="disulfide bond" description="Interchain (with C-31 in light chain)" evidence="4 9">
    <location>
        <position position="23"/>
    </location>
</feature>
<feature type="disulfide bond" evidence="4 9">
    <location>
        <begin position="41"/>
        <end position="150"/>
    </location>
</feature>
<feature type="helix" evidence="10">
    <location>
        <begin position="39"/>
        <end position="67"/>
    </location>
</feature>
<feature type="turn" evidence="10">
    <location>
        <begin position="69"/>
        <end position="71"/>
    </location>
</feature>
<feature type="helix" evidence="10">
    <location>
        <begin position="74"/>
        <end position="100"/>
    </location>
</feature>
<feature type="helix" evidence="10">
    <location>
        <begin position="109"/>
        <end position="111"/>
    </location>
</feature>
<feature type="helix" evidence="10">
    <location>
        <begin position="125"/>
        <end position="152"/>
    </location>
</feature>
<feature type="helix" evidence="10">
    <location>
        <begin position="159"/>
        <end position="167"/>
    </location>
</feature>
<feature type="helix" evidence="10">
    <location>
        <begin position="169"/>
        <end position="188"/>
    </location>
</feature>
<feature type="turn" evidence="10">
    <location>
        <begin position="189"/>
        <end position="193"/>
    </location>
</feature>
<feature type="helix" evidence="10">
    <location>
        <begin position="195"/>
        <end position="206"/>
    </location>
</feature>
<sequence length="211" mass="23757">MNSILLVFAGILAVCLPASATQCNVNPVQIPKDWITMHRSCRNSMRQQIQMEVGASLQYLAMGAHFSKDVVNRPGFAQLFFDAASEEREHAMKLIEYLLMRGELTNDVSSLLQVRPPTRSSWKGGVEALEHALSMESDVTKSIRNVIKACEDDSEFNDYHLVDYLTGDFLEEQYKGQRDLAGKASTLKKLMDRHEALGEFIFDKKLLGIDV</sequence>